<organism>
    <name type="scientific">Acanthamoeba polyphaga mimivirus</name>
    <name type="common">APMV</name>
    <dbReference type="NCBI Taxonomy" id="212035"/>
    <lineage>
        <taxon>Viruses</taxon>
        <taxon>Varidnaviria</taxon>
        <taxon>Bamfordvirae</taxon>
        <taxon>Nucleocytoviricota</taxon>
        <taxon>Megaviricetes</taxon>
        <taxon>Imitervirales</taxon>
        <taxon>Mimiviridae</taxon>
        <taxon>Megamimivirinae</taxon>
        <taxon>Mimivirus</taxon>
        <taxon>Mimivirus bradfordmassiliense</taxon>
    </lineage>
</organism>
<comment type="subcellular location">
    <subcellularLocation>
        <location evidence="2">Membrane</location>
        <topology evidence="2">Single-pass membrane protein</topology>
    </subcellularLocation>
</comment>
<gene>
    <name type="ordered locus">MIMI_R900</name>
</gene>
<sequence length="101" mass="11760">MYKMKRNTLFVRQSCVSSSRIGTQLPLNKSKIYTSSSINITNYKQDQKLYTRHYYTNGKIFENKKVDQYLKVTEEMVFSFMNGFTDGCICGTIIILCLINT</sequence>
<name>YR900_MIMIV</name>
<accession>Q5UQZ8</accession>
<dbReference type="EMBL" id="AY653733">
    <property type="protein sequence ID" value="AAV51157.1"/>
    <property type="molecule type" value="Genomic_DNA"/>
</dbReference>
<dbReference type="KEGG" id="vg:9925569"/>
<dbReference type="OrthoDB" id="36470at10239"/>
<dbReference type="Proteomes" id="UP000001134">
    <property type="component" value="Genome"/>
</dbReference>
<dbReference type="GO" id="GO:0016020">
    <property type="term" value="C:membrane"/>
    <property type="evidence" value="ECO:0007669"/>
    <property type="project" value="UniProtKB-SubCell"/>
</dbReference>
<evidence type="ECO:0000255" key="1"/>
<evidence type="ECO:0000305" key="2"/>
<feature type="chain" id="PRO_0000250638" description="Uncharacterized protein R900">
    <location>
        <begin position="1"/>
        <end position="101"/>
    </location>
</feature>
<feature type="transmembrane region" description="Helical" evidence="1">
    <location>
        <begin position="77"/>
        <end position="99"/>
    </location>
</feature>
<reference key="1">
    <citation type="journal article" date="2004" name="Science">
        <title>The 1.2-megabase genome sequence of Mimivirus.</title>
        <authorList>
            <person name="Raoult D."/>
            <person name="Audic S."/>
            <person name="Robert C."/>
            <person name="Abergel C."/>
            <person name="Renesto P."/>
            <person name="Ogata H."/>
            <person name="La Scola B."/>
            <person name="Susan M."/>
            <person name="Claverie J.-M."/>
        </authorList>
    </citation>
    <scope>NUCLEOTIDE SEQUENCE [LARGE SCALE GENOMIC DNA]</scope>
    <source>
        <strain>Rowbotham-Bradford</strain>
    </source>
</reference>
<keyword id="KW-0472">Membrane</keyword>
<keyword id="KW-1185">Reference proteome</keyword>
<keyword id="KW-0812">Transmembrane</keyword>
<keyword id="KW-1133">Transmembrane helix</keyword>
<organismHost>
    <name type="scientific">Acanthamoeba polyphaga</name>
    <name type="common">Amoeba</name>
    <dbReference type="NCBI Taxonomy" id="5757"/>
</organismHost>
<protein>
    <recommendedName>
        <fullName>Uncharacterized protein R900</fullName>
    </recommendedName>
</protein>
<proteinExistence type="predicted"/>